<organism>
    <name type="scientific">Picosynechococcus sp. (strain ATCC 27264 / PCC 7002 / PR-6)</name>
    <name type="common">Agmenellum quadruplicatum</name>
    <dbReference type="NCBI Taxonomy" id="32049"/>
    <lineage>
        <taxon>Bacteria</taxon>
        <taxon>Bacillati</taxon>
        <taxon>Cyanobacteriota</taxon>
        <taxon>Cyanophyceae</taxon>
        <taxon>Oscillatoriophycideae</taxon>
        <taxon>Chroococcales</taxon>
        <taxon>Geminocystaceae</taxon>
        <taxon>Picosynechococcus</taxon>
    </lineage>
</organism>
<proteinExistence type="inferred from homology"/>
<comment type="function">
    <text evidence="1">Involved in the gluconeogenesis. Catalyzes stereospecifically the conversion of dihydroxyacetone phosphate (DHAP) to D-glyceraldehyde-3-phosphate (G3P).</text>
</comment>
<comment type="catalytic activity">
    <reaction evidence="1">
        <text>D-glyceraldehyde 3-phosphate = dihydroxyacetone phosphate</text>
        <dbReference type="Rhea" id="RHEA:18585"/>
        <dbReference type="ChEBI" id="CHEBI:57642"/>
        <dbReference type="ChEBI" id="CHEBI:59776"/>
        <dbReference type="EC" id="5.3.1.1"/>
    </reaction>
</comment>
<comment type="pathway">
    <text evidence="1">Carbohydrate biosynthesis; gluconeogenesis.</text>
</comment>
<comment type="pathway">
    <text evidence="1">Carbohydrate degradation; glycolysis; D-glyceraldehyde 3-phosphate from glycerone phosphate: step 1/1.</text>
</comment>
<comment type="subunit">
    <text evidence="1">Homodimer.</text>
</comment>
<comment type="subcellular location">
    <subcellularLocation>
        <location evidence="1">Cytoplasm</location>
    </subcellularLocation>
</comment>
<comment type="similarity">
    <text evidence="1">Belongs to the triosephosphate isomerase family.</text>
</comment>
<keyword id="KW-0963">Cytoplasm</keyword>
<keyword id="KW-0312">Gluconeogenesis</keyword>
<keyword id="KW-0324">Glycolysis</keyword>
<keyword id="KW-0413">Isomerase</keyword>
<keyword id="KW-1185">Reference proteome</keyword>
<reference key="1">
    <citation type="submission" date="2008-02" db="EMBL/GenBank/DDBJ databases">
        <title>Complete sequence of Synechococcus sp. PCC 7002.</title>
        <authorList>
            <person name="Li T."/>
            <person name="Zhao J."/>
            <person name="Zhao C."/>
            <person name="Liu Z."/>
            <person name="Zhao F."/>
            <person name="Marquardt J."/>
            <person name="Nomura C.T."/>
            <person name="Persson S."/>
            <person name="Detter J.C."/>
            <person name="Richardson P.M."/>
            <person name="Lanz C."/>
            <person name="Schuster S.C."/>
            <person name="Wang J."/>
            <person name="Li S."/>
            <person name="Huang X."/>
            <person name="Cai T."/>
            <person name="Yu Z."/>
            <person name="Luo J."/>
            <person name="Zhao J."/>
            <person name="Bryant D.A."/>
        </authorList>
    </citation>
    <scope>NUCLEOTIDE SEQUENCE [LARGE SCALE GENOMIC DNA]</scope>
    <source>
        <strain>ATCC 27264 / PCC 7002 / PR-6</strain>
    </source>
</reference>
<feature type="chain" id="PRO_1000096541" description="Triosephosphate isomerase">
    <location>
        <begin position="1"/>
        <end position="241"/>
    </location>
</feature>
<feature type="active site" description="Electrophile" evidence="1">
    <location>
        <position position="96"/>
    </location>
</feature>
<feature type="active site" description="Proton acceptor" evidence="1">
    <location>
        <position position="165"/>
    </location>
</feature>
<feature type="binding site" evidence="1">
    <location>
        <begin position="9"/>
        <end position="11"/>
    </location>
    <ligand>
        <name>substrate</name>
    </ligand>
</feature>
<feature type="binding site" evidence="1">
    <location>
        <position position="171"/>
    </location>
    <ligand>
        <name>substrate</name>
    </ligand>
</feature>
<feature type="binding site" evidence="1">
    <location>
        <position position="204"/>
    </location>
    <ligand>
        <name>substrate</name>
    </ligand>
</feature>
<feature type="binding site" evidence="1">
    <location>
        <begin position="225"/>
        <end position="226"/>
    </location>
    <ligand>
        <name>substrate</name>
    </ligand>
</feature>
<dbReference type="EC" id="5.3.1.1" evidence="1"/>
<dbReference type="EMBL" id="CP000951">
    <property type="protein sequence ID" value="ACA98602.1"/>
    <property type="molecule type" value="Genomic_DNA"/>
</dbReference>
<dbReference type="RefSeq" id="WP_012306226.1">
    <property type="nucleotide sequence ID" value="NZ_JAHHPU010000001.1"/>
</dbReference>
<dbReference type="SMR" id="B1XPX4"/>
<dbReference type="STRING" id="32049.SYNPCC7002_A0595"/>
<dbReference type="KEGG" id="syp:SYNPCC7002_A0595"/>
<dbReference type="eggNOG" id="COG0149">
    <property type="taxonomic scope" value="Bacteria"/>
</dbReference>
<dbReference type="HOGENOM" id="CLU_024251_2_3_3"/>
<dbReference type="UniPathway" id="UPA00109">
    <property type="reaction ID" value="UER00189"/>
</dbReference>
<dbReference type="UniPathway" id="UPA00138"/>
<dbReference type="Proteomes" id="UP000001688">
    <property type="component" value="Chromosome"/>
</dbReference>
<dbReference type="GO" id="GO:0005829">
    <property type="term" value="C:cytosol"/>
    <property type="evidence" value="ECO:0007669"/>
    <property type="project" value="TreeGrafter"/>
</dbReference>
<dbReference type="GO" id="GO:0004807">
    <property type="term" value="F:triose-phosphate isomerase activity"/>
    <property type="evidence" value="ECO:0007669"/>
    <property type="project" value="UniProtKB-UniRule"/>
</dbReference>
<dbReference type="GO" id="GO:0006094">
    <property type="term" value="P:gluconeogenesis"/>
    <property type="evidence" value="ECO:0007669"/>
    <property type="project" value="UniProtKB-UniRule"/>
</dbReference>
<dbReference type="GO" id="GO:0046166">
    <property type="term" value="P:glyceraldehyde-3-phosphate biosynthetic process"/>
    <property type="evidence" value="ECO:0007669"/>
    <property type="project" value="TreeGrafter"/>
</dbReference>
<dbReference type="GO" id="GO:0019563">
    <property type="term" value="P:glycerol catabolic process"/>
    <property type="evidence" value="ECO:0007669"/>
    <property type="project" value="TreeGrafter"/>
</dbReference>
<dbReference type="GO" id="GO:0006096">
    <property type="term" value="P:glycolytic process"/>
    <property type="evidence" value="ECO:0007669"/>
    <property type="project" value="UniProtKB-UniRule"/>
</dbReference>
<dbReference type="CDD" id="cd00311">
    <property type="entry name" value="TIM"/>
    <property type="match status" value="1"/>
</dbReference>
<dbReference type="FunFam" id="3.20.20.70:FF:000016">
    <property type="entry name" value="Triosephosphate isomerase"/>
    <property type="match status" value="1"/>
</dbReference>
<dbReference type="Gene3D" id="3.20.20.70">
    <property type="entry name" value="Aldolase class I"/>
    <property type="match status" value="1"/>
</dbReference>
<dbReference type="HAMAP" id="MF_00147_B">
    <property type="entry name" value="TIM_B"/>
    <property type="match status" value="1"/>
</dbReference>
<dbReference type="InterPro" id="IPR013785">
    <property type="entry name" value="Aldolase_TIM"/>
</dbReference>
<dbReference type="InterPro" id="IPR035990">
    <property type="entry name" value="TIM_sf"/>
</dbReference>
<dbReference type="InterPro" id="IPR022896">
    <property type="entry name" value="TrioseP_Isoase_bac/euk"/>
</dbReference>
<dbReference type="InterPro" id="IPR000652">
    <property type="entry name" value="Triosephosphate_isomerase"/>
</dbReference>
<dbReference type="InterPro" id="IPR020861">
    <property type="entry name" value="Triosephosphate_isomerase_AS"/>
</dbReference>
<dbReference type="NCBIfam" id="TIGR00419">
    <property type="entry name" value="tim"/>
    <property type="match status" value="1"/>
</dbReference>
<dbReference type="PANTHER" id="PTHR21139">
    <property type="entry name" value="TRIOSEPHOSPHATE ISOMERASE"/>
    <property type="match status" value="1"/>
</dbReference>
<dbReference type="PANTHER" id="PTHR21139:SF42">
    <property type="entry name" value="TRIOSEPHOSPHATE ISOMERASE"/>
    <property type="match status" value="1"/>
</dbReference>
<dbReference type="Pfam" id="PF00121">
    <property type="entry name" value="TIM"/>
    <property type="match status" value="1"/>
</dbReference>
<dbReference type="SUPFAM" id="SSF51351">
    <property type="entry name" value="Triosephosphate isomerase (TIM)"/>
    <property type="match status" value="1"/>
</dbReference>
<dbReference type="PROSITE" id="PS00171">
    <property type="entry name" value="TIM_1"/>
    <property type="match status" value="1"/>
</dbReference>
<dbReference type="PROSITE" id="PS51440">
    <property type="entry name" value="TIM_2"/>
    <property type="match status" value="1"/>
</dbReference>
<sequence>MRKIIIAGNWKMYKTQAESLDFLKALLPKIADDHEEREVVLCTPFTDLGLMSKSLHGTRVRLGAQNIHWADEGAFTGEISGSMLTEMGVRYVIVGHSERRQYFGETDETVNQRLKAAQRHGLTPILCVGESKAQRDAGETEAVIFAQLEQDLVDIDQNNLVVAYEPIWAIGTGDTCDATEANRVIGLIREKLTNKNVTIQYGGSVKPNNVDEIMAQPEIDGALVGGASLEAESFARLVNYV</sequence>
<evidence type="ECO:0000255" key="1">
    <source>
        <dbReference type="HAMAP-Rule" id="MF_00147"/>
    </source>
</evidence>
<gene>
    <name evidence="1" type="primary">tpiA</name>
    <name type="ordered locus">SYNPCC7002_A0595</name>
</gene>
<protein>
    <recommendedName>
        <fullName evidence="1">Triosephosphate isomerase</fullName>
        <shortName evidence="1">TIM</shortName>
        <shortName evidence="1">TPI</shortName>
        <ecNumber evidence="1">5.3.1.1</ecNumber>
    </recommendedName>
    <alternativeName>
        <fullName evidence="1">Triose-phosphate isomerase</fullName>
    </alternativeName>
</protein>
<accession>B1XPX4</accession>
<name>TPIS_PICP2</name>